<accession>Q55932</accession>
<evidence type="ECO:0000250" key="1">
    <source>
        <dbReference type="UniProtKB" id="P73276"/>
    </source>
</evidence>
<evidence type="ECO:0000255" key="2"/>
<evidence type="ECO:0000255" key="3">
    <source>
        <dbReference type="PROSITE-ProRule" id="PRU00107"/>
    </source>
</evidence>
<evidence type="ECO:0000269" key="4">
    <source>
    </source>
</evidence>
<evidence type="ECO:0000269" key="5">
    <source>
    </source>
</evidence>
<evidence type="ECO:0000303" key="6">
    <source>
    </source>
</evidence>
<evidence type="ECO:0000303" key="7">
    <source>
    </source>
</evidence>
<evidence type="ECO:0000305" key="8">
    <source>
    </source>
</evidence>
<evidence type="ECO:0000312" key="9">
    <source>
        <dbReference type="EMBL" id="BAA10697.1"/>
    </source>
</evidence>
<organism>
    <name type="scientific">Synechocystis sp. (strain ATCC 27184 / PCC 6803 / Kazusa)</name>
    <dbReference type="NCBI Taxonomy" id="1111708"/>
    <lineage>
        <taxon>Bacteria</taxon>
        <taxon>Bacillati</taxon>
        <taxon>Cyanobacteriota</taxon>
        <taxon>Cyanophyceae</taxon>
        <taxon>Synechococcales</taxon>
        <taxon>Merismopediaceae</taxon>
        <taxon>Synechocystis</taxon>
    </lineage>
</organism>
<sequence>MNTRRLFARSRLQLAFWYALVMGGILTLLGLGVYRAIVQANWMALEREVESIAGTLHDSLEPMLPSNASPTGVLQKMLPDLCLVNQPCQVNPTLIERHTLGISDRSLYYIRLFDYQGNLLAFSPNQPASLSSIFNQETWQTIHPPTGDRYRQFTTILHSAGNTDKSSWGYLQIGRSLAAFDAENKRILWILGLSFPIALGLVAFSSWGLAGLAMRPIYQSYQQQQQFTANAAHELRSPLASLLATVEAVLRIDSSHSPEINTMLHTVERQGRRLSQLITDLLLLSRLEQETTAEDWRLCCLNDLVSDLTEEFLELAIAAHIDLSSDLSSGEVYAWGNESQLYRLVSNLIANAIQYTTAGGRVDITLTSHEQMAIITVQDTGIGIAPDQQEHIFERFYRVNRDRSRKTGGTGLGLAIAQVITVKHRGSLTVESALGKGSLFTIQLPIFSVPIVHS</sequence>
<proteinExistence type="evidence at protein level"/>
<reference key="1">
    <citation type="journal article" date="1996" name="DNA Res.">
        <title>Sequence analysis of the genome of the unicellular cyanobacterium Synechocystis sp. strain PCC6803. II. Sequence determination of the entire genome and assignment of potential protein-coding regions.</title>
        <authorList>
            <person name="Kaneko T."/>
            <person name="Sato S."/>
            <person name="Kotani H."/>
            <person name="Tanaka A."/>
            <person name="Asamizu E."/>
            <person name="Nakamura Y."/>
            <person name="Miyajima N."/>
            <person name="Hirosawa M."/>
            <person name="Sugiura M."/>
            <person name="Sasamoto S."/>
            <person name="Kimura T."/>
            <person name="Hosouchi T."/>
            <person name="Matsuno A."/>
            <person name="Muraki A."/>
            <person name="Nakazaki N."/>
            <person name="Naruo K."/>
            <person name="Okumura S."/>
            <person name="Shimpo S."/>
            <person name="Takeuchi C."/>
            <person name="Wada T."/>
            <person name="Watanabe A."/>
            <person name="Yamada M."/>
            <person name="Yasuda M."/>
            <person name="Tabata S."/>
        </authorList>
    </citation>
    <scope>NUCLEOTIDE SEQUENCE [LARGE SCALE GENOMIC DNA]</scope>
    <source>
        <strain>ATCC 27184 / PCC 6803 / Kazusa</strain>
    </source>
</reference>
<reference key="2">
    <citation type="journal article" date="2000" name="J. Bacteriol.">
        <title>A redox-responsive regulator of photosynthesis gene expression in the cyanobacterium Synechocystis sp. Strain PCC 6803.</title>
        <authorList>
            <person name="Li H."/>
            <person name="Sherman L.A."/>
        </authorList>
    </citation>
    <scope>FUNCTION IN PHOTOSYSTEM BALANCE</scope>
    <scope>DISRUPTION PHENOTYPE</scope>
    <source>
        <strain>ATCC 27184 / PCC 6803 / Kazusa</strain>
    </source>
</reference>
<reference key="3">
    <citation type="journal article" date="2002" name="Mol. Microbiol.">
        <title>A two-component signal transduction system involved in nickel sensing in the cyanobacterium Synechocystis sp. PCC 6803.</title>
        <authorList>
            <person name="Lopez-Maury L."/>
            <person name="Garcia-Dominguez M."/>
            <person name="Florencio F.J."/>
            <person name="Reyes J.C."/>
        </authorList>
    </citation>
    <scope>FUNCTION IN NICKEL RESPONSE</scope>
    <scope>SUBCELLULAR LOCATION</scope>
    <scope>INDUCTION BY NI(2+)</scope>
    <scope>OPERON</scope>
    <scope>DISRUPTION PHENOTYPE</scope>
    <scope>POSSIBLE TOPOLOGY</scope>
    <source>
        <strain>ATCC 27184 / PCC 6803 / Kazusa</strain>
    </source>
</reference>
<protein>
    <recommendedName>
        <fullName evidence="6">Sensor histidine kinase RppB</fullName>
        <ecNumber evidence="1">2.7.13.3</ecNumber>
    </recommendedName>
    <alternativeName>
        <fullName evidence="7">Sensor histidine kinase of nickel resistance operon NrsS</fullName>
    </alternativeName>
</protein>
<keyword id="KW-0997">Cell inner membrane</keyword>
<keyword id="KW-1003">Cell membrane</keyword>
<keyword id="KW-0418">Kinase</keyword>
<keyword id="KW-0472">Membrane</keyword>
<keyword id="KW-0597">Phosphoprotein</keyword>
<keyword id="KW-1185">Reference proteome</keyword>
<keyword id="KW-0808">Transferase</keyword>
<keyword id="KW-0812">Transmembrane</keyword>
<keyword id="KW-1133">Transmembrane helix</keyword>
<keyword id="KW-0902">Two-component regulatory system</keyword>
<feature type="chain" id="PRO_0000453146" description="Sensor histidine kinase RppB">
    <location>
        <begin position="1"/>
        <end position="454"/>
    </location>
</feature>
<feature type="topological domain" description="Periplasmic" evidence="8">
    <location>
        <begin position="1"/>
        <end position="13"/>
    </location>
</feature>
<feature type="transmembrane region" description="Helical" evidence="2">
    <location>
        <begin position="14"/>
        <end position="34"/>
    </location>
</feature>
<feature type="topological domain" description="Cytoplasmic" evidence="8">
    <location>
        <begin position="35"/>
        <end position="186"/>
    </location>
</feature>
<feature type="transmembrane region" description="Helical" evidence="2">
    <location>
        <begin position="187"/>
        <end position="207"/>
    </location>
</feature>
<feature type="topological domain" description="Periplasmic" evidence="8">
    <location>
        <begin position="208"/>
        <end position="454"/>
    </location>
</feature>
<feature type="domain" description="Histidine kinase" evidence="3">
    <location>
        <begin position="230"/>
        <end position="448"/>
    </location>
</feature>
<feature type="modified residue" description="Phosphohistidine; by autocatalysis" evidence="3">
    <location>
        <position position="233"/>
    </location>
</feature>
<dbReference type="EC" id="2.7.13.3" evidence="1"/>
<dbReference type="EMBL" id="BA000022">
    <property type="protein sequence ID" value="BAA10697.1"/>
    <property type="molecule type" value="Genomic_DNA"/>
</dbReference>
<dbReference type="PIR" id="S77005">
    <property type="entry name" value="S77005"/>
</dbReference>
<dbReference type="SMR" id="Q55932"/>
<dbReference type="FunCoup" id="Q55932">
    <property type="interactions" value="16"/>
</dbReference>
<dbReference type="IntAct" id="Q55932">
    <property type="interactions" value="9"/>
</dbReference>
<dbReference type="STRING" id="1148.gene:10500201"/>
<dbReference type="PaxDb" id="1148-1001816"/>
<dbReference type="EnsemblBacteria" id="BAA10697">
    <property type="protein sequence ID" value="BAA10697"/>
    <property type="gene ID" value="BAA10697"/>
</dbReference>
<dbReference type="KEGG" id="syn:sll0798"/>
<dbReference type="eggNOG" id="COG5002">
    <property type="taxonomic scope" value="Bacteria"/>
</dbReference>
<dbReference type="InParanoid" id="Q55932"/>
<dbReference type="PhylomeDB" id="Q55932"/>
<dbReference type="Proteomes" id="UP000001425">
    <property type="component" value="Chromosome"/>
</dbReference>
<dbReference type="GO" id="GO:0005886">
    <property type="term" value="C:plasma membrane"/>
    <property type="evidence" value="ECO:0007669"/>
    <property type="project" value="UniProtKB-SubCell"/>
</dbReference>
<dbReference type="GO" id="GO:0000155">
    <property type="term" value="F:phosphorelay sensor kinase activity"/>
    <property type="evidence" value="ECO:0007669"/>
    <property type="project" value="InterPro"/>
</dbReference>
<dbReference type="CDD" id="cd00075">
    <property type="entry name" value="HATPase"/>
    <property type="match status" value="1"/>
</dbReference>
<dbReference type="CDD" id="cd00082">
    <property type="entry name" value="HisKA"/>
    <property type="match status" value="1"/>
</dbReference>
<dbReference type="FunFam" id="3.30.565.10:FF:000006">
    <property type="entry name" value="Sensor histidine kinase WalK"/>
    <property type="match status" value="1"/>
</dbReference>
<dbReference type="Gene3D" id="1.10.287.130">
    <property type="match status" value="1"/>
</dbReference>
<dbReference type="Gene3D" id="3.30.565.10">
    <property type="entry name" value="Histidine kinase-like ATPase, C-terminal domain"/>
    <property type="match status" value="1"/>
</dbReference>
<dbReference type="InterPro" id="IPR036890">
    <property type="entry name" value="HATPase_C_sf"/>
</dbReference>
<dbReference type="InterPro" id="IPR005467">
    <property type="entry name" value="His_kinase_dom"/>
</dbReference>
<dbReference type="InterPro" id="IPR003661">
    <property type="entry name" value="HisK_dim/P_dom"/>
</dbReference>
<dbReference type="InterPro" id="IPR036097">
    <property type="entry name" value="HisK_dim/P_sf"/>
</dbReference>
<dbReference type="InterPro" id="IPR049835">
    <property type="entry name" value="RppB"/>
</dbReference>
<dbReference type="InterPro" id="IPR050736">
    <property type="entry name" value="Sensor_HK_Regulatory"/>
</dbReference>
<dbReference type="InterPro" id="IPR004358">
    <property type="entry name" value="Sig_transdc_His_kin-like_C"/>
</dbReference>
<dbReference type="NCBIfam" id="NF041735">
    <property type="entry name" value="hist_kin_RppB"/>
    <property type="match status" value="1"/>
</dbReference>
<dbReference type="PANTHER" id="PTHR43711:SF1">
    <property type="entry name" value="HISTIDINE KINASE 1"/>
    <property type="match status" value="1"/>
</dbReference>
<dbReference type="PANTHER" id="PTHR43711">
    <property type="entry name" value="TWO-COMPONENT HISTIDINE KINASE"/>
    <property type="match status" value="1"/>
</dbReference>
<dbReference type="Pfam" id="PF02518">
    <property type="entry name" value="HATPase_c"/>
    <property type="match status" value="1"/>
</dbReference>
<dbReference type="Pfam" id="PF00512">
    <property type="entry name" value="HisKA"/>
    <property type="match status" value="1"/>
</dbReference>
<dbReference type="PRINTS" id="PR00344">
    <property type="entry name" value="BCTRLSENSOR"/>
</dbReference>
<dbReference type="SMART" id="SM00387">
    <property type="entry name" value="HATPase_c"/>
    <property type="match status" value="1"/>
</dbReference>
<dbReference type="SMART" id="SM00388">
    <property type="entry name" value="HisKA"/>
    <property type="match status" value="1"/>
</dbReference>
<dbReference type="SUPFAM" id="SSF55874">
    <property type="entry name" value="ATPase domain of HSP90 chaperone/DNA topoisomerase II/histidine kinase"/>
    <property type="match status" value="1"/>
</dbReference>
<dbReference type="SUPFAM" id="SSF47384">
    <property type="entry name" value="Homodimeric domain of signal transducing histidine kinase"/>
    <property type="match status" value="1"/>
</dbReference>
<dbReference type="PROSITE" id="PS50109">
    <property type="entry name" value="HIS_KIN"/>
    <property type="match status" value="1"/>
</dbReference>
<name>RPPB_SYNY3</name>
<gene>
    <name evidence="6" type="primary">rppB</name>
    <name evidence="7" type="synonym">nrsS</name>
    <name evidence="9" type="ordered locus">sll0798</name>
</gene>
<comment type="function">
    <text evidence="4 5">Member of two-component regulatory system RppA/RppB, involved in the establishment of the appropriate stoichiometry between the 2 photosystems. It senses changes in the plastoquinone (PQ) redox poise (PubMed:10894737). Another group shows this two-component pair, renamed NrsR/NrsS, controls the nickel-dependent expression of the nrsBACD operon; they suggest the photosystem-related activities seen earlier are due to the expression of NrsS (RppB) in the absence of its natural substrate NrsR (RppA) (PubMed:11849552).</text>
</comment>
<comment type="catalytic activity">
    <reaction evidence="1">
        <text>ATP + protein L-histidine = ADP + protein N-phospho-L-histidine.</text>
        <dbReference type="EC" id="2.7.13.3"/>
    </reaction>
</comment>
<comment type="subcellular location">
    <subcellularLocation>
        <location evidence="8">Cell inner membrane</location>
        <topology evidence="2">Multi-pass membrane protein</topology>
    </subcellularLocation>
</comment>
<comment type="induction">
    <text evidence="5">Expression of the rrpa-rrpB (nrsR-nrsS) operon is induced 3-fold by Ni(2+) and less by Co(2+). Autoregulates its own expression.</text>
</comment>
<comment type="disruption phenotype">
    <text evidence="4 5">Little visible phenotype, except up-regulation of nblA, a phycobilisome degradation protein (PubMed:10894737). A double rppA-rppB (nrsR-nrsS) deletion is less tolerant to growth on Ni(2+), no longer expresses nrsB (slr0793, involved in Ni(2+) resistance) in response to Ni(2+). Loss of expression of this operon. There are no growth effects, no changes in pigment concentration, no changes in PSII or nblA transcript levels seen in the double mutant (PubMed:11849552).</text>
</comment>